<keyword id="KW-0156">Chromatin regulator</keyword>
<keyword id="KW-0158">Chromosome</keyword>
<keyword id="KW-0489">Methyltransferase</keyword>
<keyword id="KW-0539">Nucleus</keyword>
<keyword id="KW-1185">Reference proteome</keyword>
<keyword id="KW-0949">S-adenosyl-L-methionine</keyword>
<keyword id="KW-0808">Transferase</keyword>
<feature type="chain" id="PRO_0000281798" description="Histone-lysine N-methyltransferase set9">
    <location>
        <begin position="1"/>
        <end position="622"/>
    </location>
</feature>
<feature type="domain" description="SET" evidence="3">
    <location>
        <begin position="120"/>
        <end position="234"/>
    </location>
</feature>
<feature type="region of interest" description="Disordered" evidence="5">
    <location>
        <begin position="262"/>
        <end position="314"/>
    </location>
</feature>
<feature type="region of interest" description="Disordered" evidence="5">
    <location>
        <begin position="335"/>
        <end position="394"/>
    </location>
</feature>
<feature type="region of interest" description="Disordered" evidence="5">
    <location>
        <begin position="427"/>
        <end position="470"/>
    </location>
</feature>
<feature type="region of interest" description="Disordered" evidence="5">
    <location>
        <begin position="576"/>
        <end position="622"/>
    </location>
</feature>
<feature type="compositionally biased region" description="Polar residues" evidence="5">
    <location>
        <begin position="265"/>
        <end position="285"/>
    </location>
</feature>
<feature type="compositionally biased region" description="Low complexity" evidence="5">
    <location>
        <begin position="376"/>
        <end position="394"/>
    </location>
</feature>
<feature type="compositionally biased region" description="Polar residues" evidence="5">
    <location>
        <begin position="427"/>
        <end position="437"/>
    </location>
</feature>
<feature type="compositionally biased region" description="Polar residues" evidence="5">
    <location>
        <begin position="446"/>
        <end position="458"/>
    </location>
</feature>
<feature type="compositionally biased region" description="Basic and acidic residues" evidence="5">
    <location>
        <begin position="590"/>
        <end position="607"/>
    </location>
</feature>
<feature type="compositionally biased region" description="Basic residues" evidence="5">
    <location>
        <begin position="608"/>
        <end position="622"/>
    </location>
</feature>
<comment type="function">
    <text evidence="2">Histone methyltransferase that trimethylates 'Lys-20' of histone H4 to form H4K20me3.</text>
</comment>
<comment type="catalytic activity">
    <reaction evidence="2 4">
        <text>L-lysyl(20)-[histone H4] + 3 S-adenosyl-L-methionine = N(6),N(6),N(6)-trimethyl-L-lysyl(20)-[histone H4] + 3 S-adenosyl-L-homocysteine + 3 H(+)</text>
        <dbReference type="Rhea" id="RHEA:64456"/>
        <dbReference type="Rhea" id="RHEA-COMP:15554"/>
        <dbReference type="Rhea" id="RHEA-COMP:15998"/>
        <dbReference type="ChEBI" id="CHEBI:15378"/>
        <dbReference type="ChEBI" id="CHEBI:29969"/>
        <dbReference type="ChEBI" id="CHEBI:57856"/>
        <dbReference type="ChEBI" id="CHEBI:59789"/>
        <dbReference type="ChEBI" id="CHEBI:61961"/>
        <dbReference type="EC" id="2.1.1.372"/>
    </reaction>
</comment>
<comment type="subcellular location">
    <subcellularLocation>
        <location evidence="1">Nucleus</location>
    </subcellularLocation>
    <subcellularLocation>
        <location evidence="1">Chromosome</location>
    </subcellularLocation>
</comment>
<comment type="similarity">
    <text evidence="4">Belongs to the class V-like SAM-binding methyltransferase superfamily. Histone-lysine methyltransferase family. Suvar4-20 subfamily.</text>
</comment>
<accession>Q4X1W8</accession>
<reference key="1">
    <citation type="journal article" date="2005" name="Nature">
        <title>Genomic sequence of the pathogenic and allergenic filamentous fungus Aspergillus fumigatus.</title>
        <authorList>
            <person name="Nierman W.C."/>
            <person name="Pain A."/>
            <person name="Anderson M.J."/>
            <person name="Wortman J.R."/>
            <person name="Kim H.S."/>
            <person name="Arroyo J."/>
            <person name="Berriman M."/>
            <person name="Abe K."/>
            <person name="Archer D.B."/>
            <person name="Bermejo C."/>
            <person name="Bennett J.W."/>
            <person name="Bowyer P."/>
            <person name="Chen D."/>
            <person name="Collins M."/>
            <person name="Coulsen R."/>
            <person name="Davies R."/>
            <person name="Dyer P.S."/>
            <person name="Farman M.L."/>
            <person name="Fedorova N."/>
            <person name="Fedorova N.D."/>
            <person name="Feldblyum T.V."/>
            <person name="Fischer R."/>
            <person name="Fosker N."/>
            <person name="Fraser A."/>
            <person name="Garcia J.L."/>
            <person name="Garcia M.J."/>
            <person name="Goble A."/>
            <person name="Goldman G.H."/>
            <person name="Gomi K."/>
            <person name="Griffith-Jones S."/>
            <person name="Gwilliam R."/>
            <person name="Haas B.J."/>
            <person name="Haas H."/>
            <person name="Harris D.E."/>
            <person name="Horiuchi H."/>
            <person name="Huang J."/>
            <person name="Humphray S."/>
            <person name="Jimenez J."/>
            <person name="Keller N."/>
            <person name="Khouri H."/>
            <person name="Kitamoto K."/>
            <person name="Kobayashi T."/>
            <person name="Konzack S."/>
            <person name="Kulkarni R."/>
            <person name="Kumagai T."/>
            <person name="Lafton A."/>
            <person name="Latge J.-P."/>
            <person name="Li W."/>
            <person name="Lord A."/>
            <person name="Lu C."/>
            <person name="Majoros W.H."/>
            <person name="May G.S."/>
            <person name="Miller B.L."/>
            <person name="Mohamoud Y."/>
            <person name="Molina M."/>
            <person name="Monod M."/>
            <person name="Mouyna I."/>
            <person name="Mulligan S."/>
            <person name="Murphy L.D."/>
            <person name="O'Neil S."/>
            <person name="Paulsen I."/>
            <person name="Penalva M.A."/>
            <person name="Pertea M."/>
            <person name="Price C."/>
            <person name="Pritchard B.L."/>
            <person name="Quail M.A."/>
            <person name="Rabbinowitsch E."/>
            <person name="Rawlins N."/>
            <person name="Rajandream M.A."/>
            <person name="Reichard U."/>
            <person name="Renauld H."/>
            <person name="Robson G.D."/>
            <person name="Rodriguez de Cordoba S."/>
            <person name="Rodriguez-Pena J.M."/>
            <person name="Ronning C.M."/>
            <person name="Rutter S."/>
            <person name="Salzberg S.L."/>
            <person name="Sanchez M."/>
            <person name="Sanchez-Ferrero J.C."/>
            <person name="Saunders D."/>
            <person name="Seeger K."/>
            <person name="Squares R."/>
            <person name="Squares S."/>
            <person name="Takeuchi M."/>
            <person name="Tekaia F."/>
            <person name="Turner G."/>
            <person name="Vazquez de Aldana C.R."/>
            <person name="Weidman J."/>
            <person name="White O."/>
            <person name="Woodward J.R."/>
            <person name="Yu J.-H."/>
            <person name="Fraser C.M."/>
            <person name="Galagan J.E."/>
            <person name="Asai K."/>
            <person name="Machida M."/>
            <person name="Hall N."/>
            <person name="Barrell B.G."/>
            <person name="Denning D.W."/>
        </authorList>
    </citation>
    <scope>NUCLEOTIDE SEQUENCE [LARGE SCALE GENOMIC DNA]</scope>
    <source>
        <strain>ATCC MYA-4609 / CBS 101355 / FGSC A1100 / Af293</strain>
    </source>
</reference>
<name>SET9_ASPFU</name>
<sequence length="622" mass="69939">MPSAKKRDSPSVDRRDRLTLAKLASYDDIATDALVDRAYFWTNTRKNRTKYNPMRGIVDDDVARVLLHDVIVAKDLAKAERELLAMSGLKKFMARLPNNREKDWFRRHLRKYIQMYLPDSPFEITTTNRYTITEYEAAVCARKFIKQGQEIKYLSGTLVPMTREEERDLDLKRKDFSIVMSSRKKTPSFFLGPARFANHDCNANGKLVTRGSEGMQVVATRDIYIGEEITVSYGDDYFGIDNCECLCLTCERLVRNGWAPHVPSEPQSKASTPALNDDTLSTDSHVSSKKRKFAPDSDIETSAPSTPCKRGKFVRQSSKLKSEVSFLEVATSIEQPAGPSPVCNGSDMGALGNSTVESDNDKAVDPALPSPPADSPPSTAANESERSSTSTTATSVCDAAVKIKVEETIEQSAEKVSALSEANVELPTTSLRSGSTEGDTKLELSDQPSTLKQGSIGSNRKERRKSRGKPLVVESVEAERQLVRVPGDYTKTSKLLAQTYDRWVDCHTCNAWFVQHDSYLTRRECPRCERHSMLYGYRWPKTDKEGPSDDEERVMDHRTVHRFLYPEEEALISRKDRGVSFGVTPTPELSEPRTETEGSEGCEDRRTTRASRRRTRSLRMTM</sequence>
<protein>
    <recommendedName>
        <fullName>Histone-lysine N-methyltransferase set9</fullName>
        <ecNumber evidence="2">2.1.1.372</ecNumber>
    </recommendedName>
    <alternativeName>
        <fullName>SET domain protein 9</fullName>
    </alternativeName>
</protein>
<dbReference type="EC" id="2.1.1.372" evidence="2"/>
<dbReference type="EMBL" id="AAHF01000001">
    <property type="protein sequence ID" value="EAL93147.1"/>
    <property type="molecule type" value="Genomic_DNA"/>
</dbReference>
<dbReference type="RefSeq" id="XP_755185.1">
    <property type="nucleotide sequence ID" value="XM_750092.1"/>
</dbReference>
<dbReference type="SMR" id="Q4X1W8"/>
<dbReference type="STRING" id="330879.Q4X1W8"/>
<dbReference type="EnsemblFungi" id="EAL93147">
    <property type="protein sequence ID" value="EAL93147"/>
    <property type="gene ID" value="AFUA_2G08510"/>
</dbReference>
<dbReference type="GeneID" id="3513303"/>
<dbReference type="KEGG" id="afm:AFUA_2G08510"/>
<dbReference type="VEuPathDB" id="FungiDB:Afu2g08510"/>
<dbReference type="eggNOG" id="KOG2589">
    <property type="taxonomic scope" value="Eukaryota"/>
</dbReference>
<dbReference type="HOGENOM" id="CLU_013724_0_0_1"/>
<dbReference type="InParanoid" id="Q4X1W8"/>
<dbReference type="OMA" id="FANHDCG"/>
<dbReference type="OrthoDB" id="6627536at2759"/>
<dbReference type="Proteomes" id="UP000002530">
    <property type="component" value="Chromosome 2"/>
</dbReference>
<dbReference type="GO" id="GO:0005694">
    <property type="term" value="C:chromosome"/>
    <property type="evidence" value="ECO:0007669"/>
    <property type="project" value="UniProtKB-SubCell"/>
</dbReference>
<dbReference type="GO" id="GO:0005634">
    <property type="term" value="C:nucleus"/>
    <property type="evidence" value="ECO:0000318"/>
    <property type="project" value="GO_Central"/>
</dbReference>
<dbReference type="GO" id="GO:0042799">
    <property type="term" value="F:histone H4K20 methyltransferase activity"/>
    <property type="evidence" value="ECO:0000318"/>
    <property type="project" value="GO_Central"/>
</dbReference>
<dbReference type="GO" id="GO:0140943">
    <property type="term" value="F:histone H4K20 trimethyltransferase activity"/>
    <property type="evidence" value="ECO:0007669"/>
    <property type="project" value="UniProtKB-EC"/>
</dbReference>
<dbReference type="GO" id="GO:0032259">
    <property type="term" value="P:methylation"/>
    <property type="evidence" value="ECO:0007669"/>
    <property type="project" value="UniProtKB-KW"/>
</dbReference>
<dbReference type="CDD" id="cd10524">
    <property type="entry name" value="SET_Suv4-20-like"/>
    <property type="match status" value="1"/>
</dbReference>
<dbReference type="Gene3D" id="1.10.10.1700">
    <property type="entry name" value="Histone-lysine N-methyltransferase"/>
    <property type="match status" value="1"/>
</dbReference>
<dbReference type="Gene3D" id="2.170.270.10">
    <property type="entry name" value="SET domain"/>
    <property type="match status" value="1"/>
</dbReference>
<dbReference type="InterPro" id="IPR041938">
    <property type="entry name" value="Hist-Lys_N-MTase_N"/>
</dbReference>
<dbReference type="InterPro" id="IPR025783">
    <property type="entry name" value="Set9_fungi"/>
</dbReference>
<dbReference type="InterPro" id="IPR001214">
    <property type="entry name" value="SET_dom"/>
</dbReference>
<dbReference type="InterPro" id="IPR046341">
    <property type="entry name" value="SET_dom_sf"/>
</dbReference>
<dbReference type="InterPro" id="IPR039977">
    <property type="entry name" value="Suv4-20/Set9"/>
</dbReference>
<dbReference type="PANTHER" id="PTHR12977:SF4">
    <property type="entry name" value="HISTONE-LYSINE N-METHYLTRANSFERASE KMT5B"/>
    <property type="match status" value="1"/>
</dbReference>
<dbReference type="PANTHER" id="PTHR12977">
    <property type="entry name" value="SUPPRESSOR OF VARIEGATION 4-20-RELATED"/>
    <property type="match status" value="1"/>
</dbReference>
<dbReference type="Pfam" id="PF00856">
    <property type="entry name" value="SET"/>
    <property type="match status" value="1"/>
</dbReference>
<dbReference type="SMART" id="SM00317">
    <property type="entry name" value="SET"/>
    <property type="match status" value="1"/>
</dbReference>
<dbReference type="SUPFAM" id="SSF82199">
    <property type="entry name" value="SET domain"/>
    <property type="match status" value="1"/>
</dbReference>
<dbReference type="PROSITE" id="PS51567">
    <property type="entry name" value="SAM_MT43_SUVAR420_1"/>
    <property type="match status" value="1"/>
</dbReference>
<dbReference type="PROSITE" id="PS50280">
    <property type="entry name" value="SET"/>
    <property type="match status" value="1"/>
</dbReference>
<evidence type="ECO:0000250" key="1"/>
<evidence type="ECO:0000250" key="2">
    <source>
        <dbReference type="UniProtKB" id="Q9USK2"/>
    </source>
</evidence>
<evidence type="ECO:0000255" key="3">
    <source>
        <dbReference type="PROSITE-ProRule" id="PRU00190"/>
    </source>
</evidence>
<evidence type="ECO:0000255" key="4">
    <source>
        <dbReference type="PROSITE-ProRule" id="PRU00900"/>
    </source>
</evidence>
<evidence type="ECO:0000256" key="5">
    <source>
        <dbReference type="SAM" id="MobiDB-lite"/>
    </source>
</evidence>
<proteinExistence type="inferred from homology"/>
<organism>
    <name type="scientific">Aspergillus fumigatus (strain ATCC MYA-4609 / CBS 101355 / FGSC A1100 / Af293)</name>
    <name type="common">Neosartorya fumigata</name>
    <dbReference type="NCBI Taxonomy" id="330879"/>
    <lineage>
        <taxon>Eukaryota</taxon>
        <taxon>Fungi</taxon>
        <taxon>Dikarya</taxon>
        <taxon>Ascomycota</taxon>
        <taxon>Pezizomycotina</taxon>
        <taxon>Eurotiomycetes</taxon>
        <taxon>Eurotiomycetidae</taxon>
        <taxon>Eurotiales</taxon>
        <taxon>Aspergillaceae</taxon>
        <taxon>Aspergillus</taxon>
        <taxon>Aspergillus subgen. Fumigati</taxon>
    </lineage>
</organism>
<gene>
    <name type="primary">set9</name>
    <name type="ORF">AFUA_2G08510</name>
</gene>